<protein>
    <recommendedName>
        <fullName>Probable quinate permease</fullName>
    </recommendedName>
    <alternativeName>
        <fullName>Quinate transporter</fullName>
    </alternativeName>
</protein>
<proteinExistence type="inferred from homology"/>
<comment type="function">
    <text evidence="1">Integral membrane transporter that imports quinic acid to be catabolized as a carbon source.</text>
</comment>
<comment type="subunit">
    <text evidence="1">Interacts with creB.</text>
</comment>
<comment type="subcellular location">
    <subcellularLocation>
        <location>Cell membrane</location>
        <topology>Multi-pass membrane protein</topology>
    </subcellularLocation>
    <subcellularLocation>
        <location evidence="3">Cell membrane</location>
    </subcellularLocation>
</comment>
<comment type="PTM">
    <text>Ubiquitinated. Deubiquitinated by creB, probably to control its activity or amount.</text>
</comment>
<comment type="similarity">
    <text evidence="3">Belongs to the major facilitator superfamily. Sugar transporter (TC 2.A.1.1) family.</text>
</comment>
<sequence>MSILSLVEDRPTPKEVYNWKIYLLAAVASCTSCMIGYDSAFIGTTISLQSFKDEFDWDSMSAAHQDLVSSNIVSLYQAGAFFGAFFAYPIGHFWGRKWGLMVSALIFTLGAGIMLGTNGDRGFGLLYGGRVLAGLGVGAGSNITPIYISELSPPAIRGRLVGVYELGWQIGGLVGFWICYGVDETLPPSHKQWIIPFAVQLIPSGLLIIGALFLKESPRWLFLRGRREEAIKNLCWIRQLPEDHVYMIEEIGAIDQTLEHQRATIGLGFWKPFAAAWTNKKILYRLFLGSMLFFWQNGSGINAINYYSPTVFKSIGVTGSNTSLFTTGIFGVVKTVVTFIWLLWLIDRVGRRLLLLIGAAGGSICLWIVGAYIKIARPSERENKQMDGGGIAAMFFFYLWTVFYTPSWNGTPWVINSEMFDPNIRSLAQACAAGSNWLWNFLISRFTPQMFAKMDYGVYFFFASLMILSIIFVFFLIPETKGIPLESMDRLFETQPIWRAHGTLLKQIREDEERFRHDLEDSGFVKSTDRQVEVVDA</sequence>
<accession>Q2U2Y9</accession>
<feature type="chain" id="PRO_0000395717" description="Probable quinate permease">
    <location>
        <begin position="1"/>
        <end position="537"/>
    </location>
</feature>
<feature type="topological domain" description="Cytoplasmic" evidence="2">
    <location>
        <begin position="1"/>
        <end position="22"/>
    </location>
</feature>
<feature type="transmembrane region" description="Helical" evidence="2">
    <location>
        <begin position="23"/>
        <end position="43"/>
    </location>
</feature>
<feature type="topological domain" description="Extracellular" evidence="2">
    <location>
        <begin position="44"/>
        <end position="74"/>
    </location>
</feature>
<feature type="transmembrane region" description="Helical" evidence="2">
    <location>
        <begin position="75"/>
        <end position="95"/>
    </location>
</feature>
<feature type="topological domain" description="Cytoplasmic" evidence="2">
    <location>
        <begin position="96"/>
        <end position="97"/>
    </location>
</feature>
<feature type="transmembrane region" description="Helical" evidence="2">
    <location>
        <begin position="98"/>
        <end position="118"/>
    </location>
</feature>
<feature type="topological domain" description="Extracellular" evidence="2">
    <location>
        <begin position="119"/>
        <end position="130"/>
    </location>
</feature>
<feature type="transmembrane region" description="Helical" evidence="2">
    <location>
        <begin position="131"/>
        <end position="151"/>
    </location>
</feature>
<feature type="topological domain" description="Cytoplasmic" evidence="2">
    <location>
        <begin position="152"/>
        <end position="159"/>
    </location>
</feature>
<feature type="transmembrane region" description="Helical" evidence="2">
    <location>
        <begin position="160"/>
        <end position="180"/>
    </location>
</feature>
<feature type="topological domain" description="Extracellular" evidence="2">
    <location>
        <begin position="181"/>
        <end position="193"/>
    </location>
</feature>
<feature type="transmembrane region" description="Helical" evidence="2">
    <location>
        <begin position="194"/>
        <end position="214"/>
    </location>
</feature>
<feature type="topological domain" description="Cytoplasmic" evidence="2">
    <location>
        <begin position="215"/>
        <end position="285"/>
    </location>
</feature>
<feature type="transmembrane region" description="Helical" evidence="2">
    <location>
        <begin position="286"/>
        <end position="306"/>
    </location>
</feature>
<feature type="topological domain" description="Extracellular" evidence="2">
    <location>
        <begin position="307"/>
        <end position="325"/>
    </location>
</feature>
<feature type="transmembrane region" description="Helical" evidence="2">
    <location>
        <begin position="326"/>
        <end position="346"/>
    </location>
</feature>
<feature type="topological domain" description="Cytoplasmic" evidence="2">
    <location>
        <begin position="347"/>
        <end position="352"/>
    </location>
</feature>
<feature type="transmembrane region" description="Helical" evidence="2">
    <location>
        <begin position="353"/>
        <end position="373"/>
    </location>
</feature>
<feature type="topological domain" description="Extracellular" evidence="2">
    <location>
        <begin position="374"/>
        <end position="387"/>
    </location>
</feature>
<feature type="transmembrane region" description="Helical" evidence="2">
    <location>
        <begin position="388"/>
        <end position="408"/>
    </location>
</feature>
<feature type="topological domain" description="Cytoplasmic" evidence="2">
    <location>
        <begin position="409"/>
        <end position="456"/>
    </location>
</feature>
<feature type="transmembrane region" description="Helical" evidence="2">
    <location>
        <begin position="457"/>
        <end position="477"/>
    </location>
</feature>
<feature type="topological domain" description="Extracellular" evidence="2">
    <location>
        <begin position="478"/>
        <end position="537"/>
    </location>
</feature>
<name>QUTD_ASPOR</name>
<dbReference type="EMBL" id="BA000054">
    <property type="protein sequence ID" value="BAE64076.1"/>
    <property type="molecule type" value="Genomic_DNA"/>
</dbReference>
<dbReference type="RefSeq" id="XP_001825209.1">
    <property type="nucleotide sequence ID" value="XM_001825157.2"/>
</dbReference>
<dbReference type="SMR" id="Q2U2Y9"/>
<dbReference type="STRING" id="510516.Q2U2Y9"/>
<dbReference type="EnsemblFungi" id="BAE64076">
    <property type="protein sequence ID" value="BAE64076"/>
    <property type="gene ID" value="AO090038000264"/>
</dbReference>
<dbReference type="GeneID" id="5997304"/>
<dbReference type="KEGG" id="aor:AO090038000264"/>
<dbReference type="VEuPathDB" id="FungiDB:AO090038000264"/>
<dbReference type="HOGENOM" id="CLU_001265_30_12_1"/>
<dbReference type="OMA" id="PADHIYM"/>
<dbReference type="OrthoDB" id="16600at5052"/>
<dbReference type="Proteomes" id="UP000006564">
    <property type="component" value="Chromosome 6"/>
</dbReference>
<dbReference type="GO" id="GO:0005886">
    <property type="term" value="C:plasma membrane"/>
    <property type="evidence" value="ECO:0007669"/>
    <property type="project" value="UniProtKB-SubCell"/>
</dbReference>
<dbReference type="GO" id="GO:0005351">
    <property type="term" value="F:carbohydrate:proton symporter activity"/>
    <property type="evidence" value="ECO:0007669"/>
    <property type="project" value="TreeGrafter"/>
</dbReference>
<dbReference type="GO" id="GO:0019630">
    <property type="term" value="P:quinate metabolic process"/>
    <property type="evidence" value="ECO:0007669"/>
    <property type="project" value="UniProtKB-KW"/>
</dbReference>
<dbReference type="FunFam" id="1.20.1250.20:FF:000026">
    <property type="entry name" value="MFS quinate transporter QutD"/>
    <property type="match status" value="1"/>
</dbReference>
<dbReference type="Gene3D" id="1.20.1250.20">
    <property type="entry name" value="MFS general substrate transporter like domains"/>
    <property type="match status" value="1"/>
</dbReference>
<dbReference type="InterPro" id="IPR020846">
    <property type="entry name" value="MFS_dom"/>
</dbReference>
<dbReference type="InterPro" id="IPR005828">
    <property type="entry name" value="MFS_sugar_transport-like"/>
</dbReference>
<dbReference type="InterPro" id="IPR050360">
    <property type="entry name" value="MFS_Sugar_Transporters"/>
</dbReference>
<dbReference type="InterPro" id="IPR036259">
    <property type="entry name" value="MFS_trans_sf"/>
</dbReference>
<dbReference type="InterPro" id="IPR003663">
    <property type="entry name" value="Sugar/inositol_transpt"/>
</dbReference>
<dbReference type="InterPro" id="IPR005829">
    <property type="entry name" value="Sugar_transporter_CS"/>
</dbReference>
<dbReference type="NCBIfam" id="TIGR00879">
    <property type="entry name" value="SP"/>
    <property type="match status" value="1"/>
</dbReference>
<dbReference type="PANTHER" id="PTHR48022:SF34">
    <property type="entry name" value="MAJOR FACILITATOR SUPERFAMILY (MFS) PROFILE DOMAIN-CONTAINING PROTEIN-RELATED"/>
    <property type="match status" value="1"/>
</dbReference>
<dbReference type="PANTHER" id="PTHR48022">
    <property type="entry name" value="PLASTIDIC GLUCOSE TRANSPORTER 4"/>
    <property type="match status" value="1"/>
</dbReference>
<dbReference type="Pfam" id="PF00083">
    <property type="entry name" value="Sugar_tr"/>
    <property type="match status" value="1"/>
</dbReference>
<dbReference type="PRINTS" id="PR00171">
    <property type="entry name" value="SUGRTRNSPORT"/>
</dbReference>
<dbReference type="SUPFAM" id="SSF103473">
    <property type="entry name" value="MFS general substrate transporter"/>
    <property type="match status" value="1"/>
</dbReference>
<dbReference type="PROSITE" id="PS50850">
    <property type="entry name" value="MFS"/>
    <property type="match status" value="1"/>
</dbReference>
<dbReference type="PROSITE" id="PS00216">
    <property type="entry name" value="SUGAR_TRANSPORT_1"/>
    <property type="match status" value="1"/>
</dbReference>
<dbReference type="PROSITE" id="PS00217">
    <property type="entry name" value="SUGAR_TRANSPORT_2"/>
    <property type="match status" value="1"/>
</dbReference>
<organism>
    <name type="scientific">Aspergillus oryzae (strain ATCC 42149 / RIB 40)</name>
    <name type="common">Yellow koji mold</name>
    <dbReference type="NCBI Taxonomy" id="510516"/>
    <lineage>
        <taxon>Eukaryota</taxon>
        <taxon>Fungi</taxon>
        <taxon>Dikarya</taxon>
        <taxon>Ascomycota</taxon>
        <taxon>Pezizomycotina</taxon>
        <taxon>Eurotiomycetes</taxon>
        <taxon>Eurotiomycetidae</taxon>
        <taxon>Eurotiales</taxon>
        <taxon>Aspergillaceae</taxon>
        <taxon>Aspergillus</taxon>
        <taxon>Aspergillus subgen. Circumdati</taxon>
    </lineage>
</organism>
<reference key="1">
    <citation type="journal article" date="2005" name="Nature">
        <title>Genome sequencing and analysis of Aspergillus oryzae.</title>
        <authorList>
            <person name="Machida M."/>
            <person name="Asai K."/>
            <person name="Sano M."/>
            <person name="Tanaka T."/>
            <person name="Kumagai T."/>
            <person name="Terai G."/>
            <person name="Kusumoto K."/>
            <person name="Arima T."/>
            <person name="Akita O."/>
            <person name="Kashiwagi Y."/>
            <person name="Abe K."/>
            <person name="Gomi K."/>
            <person name="Horiuchi H."/>
            <person name="Kitamoto K."/>
            <person name="Kobayashi T."/>
            <person name="Takeuchi M."/>
            <person name="Denning D.W."/>
            <person name="Galagan J.E."/>
            <person name="Nierman W.C."/>
            <person name="Yu J."/>
            <person name="Archer D.B."/>
            <person name="Bennett J.W."/>
            <person name="Bhatnagar D."/>
            <person name="Cleveland T.E."/>
            <person name="Fedorova N.D."/>
            <person name="Gotoh O."/>
            <person name="Horikawa H."/>
            <person name="Hosoyama A."/>
            <person name="Ichinomiya M."/>
            <person name="Igarashi R."/>
            <person name="Iwashita K."/>
            <person name="Juvvadi P.R."/>
            <person name="Kato M."/>
            <person name="Kato Y."/>
            <person name="Kin T."/>
            <person name="Kokubun A."/>
            <person name="Maeda H."/>
            <person name="Maeyama N."/>
            <person name="Maruyama J."/>
            <person name="Nagasaki H."/>
            <person name="Nakajima T."/>
            <person name="Oda K."/>
            <person name="Okada K."/>
            <person name="Paulsen I."/>
            <person name="Sakamoto K."/>
            <person name="Sawano T."/>
            <person name="Takahashi M."/>
            <person name="Takase K."/>
            <person name="Terabayashi Y."/>
            <person name="Wortman J.R."/>
            <person name="Yamada O."/>
            <person name="Yamagata Y."/>
            <person name="Anazawa H."/>
            <person name="Hata Y."/>
            <person name="Koide Y."/>
            <person name="Komori T."/>
            <person name="Koyama Y."/>
            <person name="Minetoki T."/>
            <person name="Suharnan S."/>
            <person name="Tanaka A."/>
            <person name="Isono K."/>
            <person name="Kuhara S."/>
            <person name="Ogasawara N."/>
            <person name="Kikuchi H."/>
        </authorList>
    </citation>
    <scope>NUCLEOTIDE SEQUENCE [LARGE SCALE GENOMIC DNA]</scope>
    <source>
        <strain>ATCC 42149 / RIB 40</strain>
    </source>
</reference>
<gene>
    <name type="primary">qutD</name>
    <name type="ORF">AO090038000264</name>
</gene>
<keyword id="KW-1003">Cell membrane</keyword>
<keyword id="KW-0472">Membrane</keyword>
<keyword id="KW-0672">Quinate metabolism</keyword>
<keyword id="KW-1185">Reference proteome</keyword>
<keyword id="KW-0812">Transmembrane</keyword>
<keyword id="KW-1133">Transmembrane helix</keyword>
<keyword id="KW-0813">Transport</keyword>
<keyword id="KW-0832">Ubl conjugation</keyword>
<evidence type="ECO:0000250" key="1"/>
<evidence type="ECO:0000255" key="2"/>
<evidence type="ECO:0000305" key="3"/>